<protein>
    <recommendedName>
        <fullName>Uncharacterized protein 032R</fullName>
    </recommendedName>
</protein>
<proteinExistence type="predicted"/>
<name>032R_IIV3</name>
<reference key="1">
    <citation type="journal article" date="2006" name="J. Virol.">
        <title>Genome of invertebrate iridescent virus type 3 (mosquito iridescent virus).</title>
        <authorList>
            <person name="Delhon G."/>
            <person name="Tulman E.R."/>
            <person name="Afonso C.L."/>
            <person name="Lu Z."/>
            <person name="Becnel J.J."/>
            <person name="Moser B.A."/>
            <person name="Kutish G.F."/>
            <person name="Rock D.L."/>
        </authorList>
    </citation>
    <scope>NUCLEOTIDE SEQUENCE [LARGE SCALE GENOMIC DNA]</scope>
</reference>
<sequence>MKLMLEIVKNISEPVGKLAIWFNETYQVDVSETINKWNELTGMNITVQENAVSADDTTAEETEYSVVVNENPTRTAARTRKESKTAAKPRKMQIPKTKDVCQHIFKSGSRAGEQCTTKPKNNALFCSAHRVRNSVTSNATEASEKTVAKTNGTAAPQKRGVKSKSPTVIPSDFDDSDSSSSATRGLRKAPTLSPRKPPPTTTTASSAQEEEDEQQAHFSGSSSPPPKNNGNGAVYSDSSSDEDDDDAHHTTVIPLLKKGARKPLDENVQFTSDSSDEED</sequence>
<accession>Q197C8</accession>
<feature type="chain" id="PRO_0000377949" description="Uncharacterized protein 032R">
    <location>
        <begin position="1"/>
        <end position="279"/>
    </location>
</feature>
<feature type="region of interest" description="Disordered" evidence="1">
    <location>
        <begin position="136"/>
        <end position="279"/>
    </location>
</feature>
<feature type="compositionally biased region" description="Low complexity" evidence="1">
    <location>
        <begin position="228"/>
        <end position="238"/>
    </location>
</feature>
<gene>
    <name type="ORF">IIV3-032R</name>
</gene>
<dbReference type="EMBL" id="DQ643392">
    <property type="protein sequence ID" value="ABF82062.1"/>
    <property type="molecule type" value="Genomic_DNA"/>
</dbReference>
<dbReference type="RefSeq" id="YP_654604.1">
    <property type="nucleotide sequence ID" value="NC_008187.1"/>
</dbReference>
<dbReference type="KEGG" id="vg:4156342"/>
<dbReference type="OrthoDB" id="26783at10239"/>
<dbReference type="Proteomes" id="UP000001358">
    <property type="component" value="Genome"/>
</dbReference>
<organism>
    <name type="scientific">Invertebrate iridescent virus 3</name>
    <name type="common">IIV-3</name>
    <name type="synonym">Mosquito iridescent virus</name>
    <dbReference type="NCBI Taxonomy" id="345201"/>
    <lineage>
        <taxon>Viruses</taxon>
        <taxon>Varidnaviria</taxon>
        <taxon>Bamfordvirae</taxon>
        <taxon>Nucleocytoviricota</taxon>
        <taxon>Megaviricetes</taxon>
        <taxon>Pimascovirales</taxon>
        <taxon>Iridoviridae</taxon>
        <taxon>Betairidovirinae</taxon>
        <taxon>Chloriridovirus</taxon>
    </lineage>
</organism>
<organismHost>
    <name type="scientific">Aedes vexans</name>
    <name type="common">Inland floodwater mosquito</name>
    <name type="synonym">Culex vexans</name>
    <dbReference type="NCBI Taxonomy" id="7163"/>
</organismHost>
<organismHost>
    <name type="scientific">Culex territans</name>
    <dbReference type="NCBI Taxonomy" id="42431"/>
</organismHost>
<organismHost>
    <name type="scientific">Culiseta annulata</name>
    <dbReference type="NCBI Taxonomy" id="332058"/>
</organismHost>
<organismHost>
    <name type="scientific">Ochlerotatus sollicitans</name>
    <name type="common">eastern saltmarsh mosquito</name>
    <dbReference type="NCBI Taxonomy" id="310513"/>
</organismHost>
<organismHost>
    <name type="scientific">Ochlerotatus taeniorhynchus</name>
    <name type="common">Black salt marsh mosquito</name>
    <name type="synonym">Aedes taeniorhynchus</name>
    <dbReference type="NCBI Taxonomy" id="329105"/>
</organismHost>
<organismHost>
    <name type="scientific">Psorophora ferox</name>
    <dbReference type="NCBI Taxonomy" id="7183"/>
</organismHost>
<evidence type="ECO:0000256" key="1">
    <source>
        <dbReference type="SAM" id="MobiDB-lite"/>
    </source>
</evidence>
<keyword id="KW-1185">Reference proteome</keyword>